<name>HSLU_BURCJ</name>
<protein>
    <recommendedName>
        <fullName evidence="1">ATP-dependent protease ATPase subunit HslU</fullName>
    </recommendedName>
    <alternativeName>
        <fullName evidence="1">Unfoldase HslU</fullName>
    </alternativeName>
</protein>
<gene>
    <name evidence="1" type="primary">hslU</name>
    <name type="ordered locus">BceJ2315_04970</name>
    <name type="ORF">BCAL0500</name>
</gene>
<keyword id="KW-0067">ATP-binding</keyword>
<keyword id="KW-0143">Chaperone</keyword>
<keyword id="KW-0963">Cytoplasm</keyword>
<keyword id="KW-0547">Nucleotide-binding</keyword>
<comment type="function">
    <text evidence="1">ATPase subunit of a proteasome-like degradation complex; this subunit has chaperone activity. The binding of ATP and its subsequent hydrolysis by HslU are essential for unfolding of protein substrates subsequently hydrolyzed by HslV. HslU recognizes the N-terminal part of its protein substrates and unfolds these before they are guided to HslV for hydrolysis.</text>
</comment>
<comment type="subunit">
    <text evidence="1">A double ring-shaped homohexamer of HslV is capped on each side by a ring-shaped HslU homohexamer. The assembly of the HslU/HslV complex is dependent on binding of ATP.</text>
</comment>
<comment type="subcellular location">
    <subcellularLocation>
        <location evidence="1">Cytoplasm</location>
    </subcellularLocation>
</comment>
<comment type="similarity">
    <text evidence="1">Belongs to the ClpX chaperone family. HslU subfamily.</text>
</comment>
<reference key="1">
    <citation type="journal article" date="2009" name="J. Bacteriol.">
        <title>The genome of Burkholderia cenocepacia J2315, an epidemic pathogen of cystic fibrosis patients.</title>
        <authorList>
            <person name="Holden M.T."/>
            <person name="Seth-Smith H.M."/>
            <person name="Crossman L.C."/>
            <person name="Sebaihia M."/>
            <person name="Bentley S.D."/>
            <person name="Cerdeno-Tarraga A.M."/>
            <person name="Thomson N.R."/>
            <person name="Bason N."/>
            <person name="Quail M.A."/>
            <person name="Sharp S."/>
            <person name="Cherevach I."/>
            <person name="Churcher C."/>
            <person name="Goodhead I."/>
            <person name="Hauser H."/>
            <person name="Holroyd N."/>
            <person name="Mungall K."/>
            <person name="Scott P."/>
            <person name="Walker D."/>
            <person name="White B."/>
            <person name="Rose H."/>
            <person name="Iversen P."/>
            <person name="Mil-Homens D."/>
            <person name="Rocha E.P."/>
            <person name="Fialho A.M."/>
            <person name="Baldwin A."/>
            <person name="Dowson C."/>
            <person name="Barrell B.G."/>
            <person name="Govan J.R."/>
            <person name="Vandamme P."/>
            <person name="Hart C.A."/>
            <person name="Mahenthiralingam E."/>
            <person name="Parkhill J."/>
        </authorList>
    </citation>
    <scope>NUCLEOTIDE SEQUENCE [LARGE SCALE GENOMIC DNA]</scope>
    <source>
        <strain>ATCC BAA-245 / DSM 16553 / LMG 16656 / NCTC 13227 / J2315 / CF5610</strain>
    </source>
</reference>
<dbReference type="EMBL" id="AM747720">
    <property type="protein sequence ID" value="CAR50810.1"/>
    <property type="molecule type" value="Genomic_DNA"/>
</dbReference>
<dbReference type="RefSeq" id="WP_006483681.1">
    <property type="nucleotide sequence ID" value="NC_011000.1"/>
</dbReference>
<dbReference type="SMR" id="B4E7Z1"/>
<dbReference type="GeneID" id="56559684"/>
<dbReference type="KEGG" id="bcj:BCAL0500"/>
<dbReference type="eggNOG" id="COG1220">
    <property type="taxonomic scope" value="Bacteria"/>
</dbReference>
<dbReference type="HOGENOM" id="CLU_033123_0_0_4"/>
<dbReference type="BioCyc" id="BCEN216591:G1G1V-570-MONOMER"/>
<dbReference type="Proteomes" id="UP000001035">
    <property type="component" value="Chromosome 1"/>
</dbReference>
<dbReference type="GO" id="GO:0009376">
    <property type="term" value="C:HslUV protease complex"/>
    <property type="evidence" value="ECO:0007669"/>
    <property type="project" value="UniProtKB-UniRule"/>
</dbReference>
<dbReference type="GO" id="GO:0005524">
    <property type="term" value="F:ATP binding"/>
    <property type="evidence" value="ECO:0007669"/>
    <property type="project" value="UniProtKB-UniRule"/>
</dbReference>
<dbReference type="GO" id="GO:0016887">
    <property type="term" value="F:ATP hydrolysis activity"/>
    <property type="evidence" value="ECO:0007669"/>
    <property type="project" value="InterPro"/>
</dbReference>
<dbReference type="GO" id="GO:0008233">
    <property type="term" value="F:peptidase activity"/>
    <property type="evidence" value="ECO:0007669"/>
    <property type="project" value="InterPro"/>
</dbReference>
<dbReference type="GO" id="GO:0036402">
    <property type="term" value="F:proteasome-activating activity"/>
    <property type="evidence" value="ECO:0007669"/>
    <property type="project" value="UniProtKB-UniRule"/>
</dbReference>
<dbReference type="GO" id="GO:0043335">
    <property type="term" value="P:protein unfolding"/>
    <property type="evidence" value="ECO:0007669"/>
    <property type="project" value="UniProtKB-UniRule"/>
</dbReference>
<dbReference type="GO" id="GO:0051603">
    <property type="term" value="P:proteolysis involved in protein catabolic process"/>
    <property type="evidence" value="ECO:0007669"/>
    <property type="project" value="TreeGrafter"/>
</dbReference>
<dbReference type="CDD" id="cd19498">
    <property type="entry name" value="RecA-like_HslU"/>
    <property type="match status" value="1"/>
</dbReference>
<dbReference type="FunFam" id="3.40.50.300:FF:000213">
    <property type="entry name" value="ATP-dependent protease ATPase subunit HslU"/>
    <property type="match status" value="1"/>
</dbReference>
<dbReference type="FunFam" id="3.40.50.300:FF:000220">
    <property type="entry name" value="ATP-dependent protease ATPase subunit HslU"/>
    <property type="match status" value="1"/>
</dbReference>
<dbReference type="Gene3D" id="1.10.8.60">
    <property type="match status" value="1"/>
</dbReference>
<dbReference type="Gene3D" id="3.40.50.300">
    <property type="entry name" value="P-loop containing nucleotide triphosphate hydrolases"/>
    <property type="match status" value="2"/>
</dbReference>
<dbReference type="HAMAP" id="MF_00249">
    <property type="entry name" value="HslU"/>
    <property type="match status" value="1"/>
</dbReference>
<dbReference type="InterPro" id="IPR003593">
    <property type="entry name" value="AAA+_ATPase"/>
</dbReference>
<dbReference type="InterPro" id="IPR050052">
    <property type="entry name" value="ATP-dep_Clp_protease_ClpX"/>
</dbReference>
<dbReference type="InterPro" id="IPR003959">
    <property type="entry name" value="ATPase_AAA_core"/>
</dbReference>
<dbReference type="InterPro" id="IPR019489">
    <property type="entry name" value="Clp_ATPase_C"/>
</dbReference>
<dbReference type="InterPro" id="IPR004491">
    <property type="entry name" value="HslU"/>
</dbReference>
<dbReference type="InterPro" id="IPR027417">
    <property type="entry name" value="P-loop_NTPase"/>
</dbReference>
<dbReference type="NCBIfam" id="TIGR00390">
    <property type="entry name" value="hslU"/>
    <property type="match status" value="1"/>
</dbReference>
<dbReference type="NCBIfam" id="NF003544">
    <property type="entry name" value="PRK05201.1"/>
    <property type="match status" value="1"/>
</dbReference>
<dbReference type="PANTHER" id="PTHR48102">
    <property type="entry name" value="ATP-DEPENDENT CLP PROTEASE ATP-BINDING SUBUNIT CLPX-LIKE, MITOCHONDRIAL-RELATED"/>
    <property type="match status" value="1"/>
</dbReference>
<dbReference type="PANTHER" id="PTHR48102:SF3">
    <property type="entry name" value="ATP-DEPENDENT PROTEASE ATPASE SUBUNIT HSLU"/>
    <property type="match status" value="1"/>
</dbReference>
<dbReference type="Pfam" id="PF00004">
    <property type="entry name" value="AAA"/>
    <property type="match status" value="1"/>
</dbReference>
<dbReference type="Pfam" id="PF07724">
    <property type="entry name" value="AAA_2"/>
    <property type="match status" value="1"/>
</dbReference>
<dbReference type="SMART" id="SM00382">
    <property type="entry name" value="AAA"/>
    <property type="match status" value="1"/>
</dbReference>
<dbReference type="SMART" id="SM01086">
    <property type="entry name" value="ClpB_D2-small"/>
    <property type="match status" value="1"/>
</dbReference>
<dbReference type="SUPFAM" id="SSF52540">
    <property type="entry name" value="P-loop containing nucleoside triphosphate hydrolases"/>
    <property type="match status" value="1"/>
</dbReference>
<sequence length="447" mass="49833">MSTMTPAEIVSELDKHIIGQAKAKKAVAVALRNRWRRQQVADPLRQEITPKNILMIGPTGVGKTEIARRLAKLADAPFIKIEATKFTEVGYVGRDVDSIVRDLIEISVKQTREAEMRKVRSKATDQAEDRILDILLPQPRAVGFGGNAEHANDDNNATRQTFRKRLREGQLDDKEVELDLEQPSVGMDIMAPPGMEEMTEQIRSMFSNLGSGKKQRRKVKIKEALKLLTDEEAAKMLNEEEVKTKAVQNVEQNGIVFLDEIDKITSRNNEGSGGEVSRQGVQRDLLPLVEGTTVNTKYGMVKTDHILFIASGAFHLAKPSDLIPELQGRFPIRVELDSLSVNDFEAILVATDASLVKQYQALLATEDVQLEFADDGIRRLAEIAFAVNEKTENIGARRLYTVIEKLLEEVSFSAGNHAGERVTIDAKYVDRALGEVSQDEDLSRYVL</sequence>
<feature type="chain" id="PRO_1000100940" description="ATP-dependent protease ATPase subunit HslU">
    <location>
        <begin position="1"/>
        <end position="447"/>
    </location>
</feature>
<feature type="binding site" evidence="1">
    <location>
        <position position="18"/>
    </location>
    <ligand>
        <name>ATP</name>
        <dbReference type="ChEBI" id="CHEBI:30616"/>
    </ligand>
</feature>
<feature type="binding site" evidence="1">
    <location>
        <begin position="60"/>
        <end position="65"/>
    </location>
    <ligand>
        <name>ATP</name>
        <dbReference type="ChEBI" id="CHEBI:30616"/>
    </ligand>
</feature>
<feature type="binding site" evidence="1">
    <location>
        <position position="259"/>
    </location>
    <ligand>
        <name>ATP</name>
        <dbReference type="ChEBI" id="CHEBI:30616"/>
    </ligand>
</feature>
<feature type="binding site" evidence="1">
    <location>
        <position position="325"/>
    </location>
    <ligand>
        <name>ATP</name>
        <dbReference type="ChEBI" id="CHEBI:30616"/>
    </ligand>
</feature>
<feature type="binding site" evidence="1">
    <location>
        <position position="397"/>
    </location>
    <ligand>
        <name>ATP</name>
        <dbReference type="ChEBI" id="CHEBI:30616"/>
    </ligand>
</feature>
<organism>
    <name type="scientific">Burkholderia cenocepacia (strain ATCC BAA-245 / DSM 16553 / LMG 16656 / NCTC 13227 / J2315 / CF5610)</name>
    <name type="common">Burkholderia cepacia (strain J2315)</name>
    <dbReference type="NCBI Taxonomy" id="216591"/>
    <lineage>
        <taxon>Bacteria</taxon>
        <taxon>Pseudomonadati</taxon>
        <taxon>Pseudomonadota</taxon>
        <taxon>Betaproteobacteria</taxon>
        <taxon>Burkholderiales</taxon>
        <taxon>Burkholderiaceae</taxon>
        <taxon>Burkholderia</taxon>
        <taxon>Burkholderia cepacia complex</taxon>
    </lineage>
</organism>
<accession>B4E7Z1</accession>
<evidence type="ECO:0000255" key="1">
    <source>
        <dbReference type="HAMAP-Rule" id="MF_00249"/>
    </source>
</evidence>
<proteinExistence type="inferred from homology"/>